<evidence type="ECO:0000250" key="1"/>
<evidence type="ECO:0000250" key="2">
    <source>
        <dbReference type="UniProtKB" id="P46066"/>
    </source>
</evidence>
<evidence type="ECO:0000255" key="3"/>
<evidence type="ECO:0000255" key="4">
    <source>
        <dbReference type="PROSITE-ProRule" id="PRU01210"/>
    </source>
</evidence>
<evidence type="ECO:0000305" key="5"/>
<evidence type="ECO:0000305" key="6">
    <source>
    </source>
</evidence>
<evidence type="ECO:0000312" key="7">
    <source>
        <dbReference type="EMBL" id="ADV16824.1"/>
    </source>
</evidence>
<reference key="1">
    <citation type="journal article" date="2011" name="Toxicon">
        <title>Biochemical and molecular characterization of the venom from the Cuban scorpion Rhopalurus junceus.</title>
        <authorList>
            <person name="Garcia-Gomez B.I."/>
            <person name="Coronas F.I."/>
            <person name="Restano-Cassulini R."/>
            <person name="Rodriguez R.R."/>
            <person name="Possani L.D."/>
        </authorList>
    </citation>
    <scope>NUCLEOTIDE SEQUENCE [MRNA]</scope>
    <source>
        <tissue>Venom gland</tissue>
    </source>
</reference>
<keyword id="KW-1015">Disulfide bond</keyword>
<keyword id="KW-0872">Ion channel impairing toxin</keyword>
<keyword id="KW-0528">Neurotoxin</keyword>
<keyword id="KW-0964">Secreted</keyword>
<keyword id="KW-0800">Toxin</keyword>
<keyword id="KW-0738">Voltage-gated sodium channel impairing toxin</keyword>
<feature type="chain" id="PRO_0000413448" description="Putative alpha-neurotoxin RjAa13">
    <location>
        <begin position="1"/>
        <end position="66"/>
    </location>
</feature>
<feature type="domain" description="LCN-type CS-alpha/beta" evidence="4">
    <location>
        <begin position="1"/>
        <end position="60"/>
    </location>
</feature>
<feature type="disulfide bond" evidence="4">
    <location>
        <begin position="11"/>
        <end position="59"/>
    </location>
</feature>
<feature type="disulfide bond" evidence="4">
    <location>
        <begin position="15"/>
        <end position="35"/>
    </location>
</feature>
<feature type="disulfide bond" evidence="4">
    <location>
        <begin position="21"/>
        <end position="42"/>
    </location>
</feature>
<feature type="disulfide bond" evidence="4">
    <location>
        <begin position="25"/>
        <end position="44"/>
    </location>
</feature>
<feature type="non-terminal residue" evidence="7">
    <location>
        <position position="1"/>
    </location>
</feature>
<name>SCX13_RHOJU</name>
<proteinExistence type="evidence at transcript level"/>
<sequence length="66" mass="7564">KEGYPVDWGNCKYECMSDAYCKDLCVDRKAKSGYCYKLNWSCYCEGLPDDSPIKTNGHCRPGGRRK</sequence>
<protein>
    <recommendedName>
        <fullName evidence="6">Putative alpha-neurotoxin RjAa13</fullName>
    </recommendedName>
</protein>
<comment type="function">
    <text evidence="1">Alpha toxins bind voltage-independently at site-3 of sodium channels (Nav) and inhibits the inactivation of the activated channels, thereby blocking neuronal transmission.</text>
</comment>
<comment type="subcellular location">
    <subcellularLocation>
        <location evidence="2">Secreted</location>
    </subcellularLocation>
</comment>
<comment type="tissue specificity">
    <text evidence="6">Expressed by the venom gland.</text>
</comment>
<comment type="domain">
    <text evidence="5">Has the structural arrangement of an alpha-helix connected to antiparallel beta-sheets by disulfide bonds (CS-alpha/beta).</text>
</comment>
<comment type="similarity">
    <text evidence="3">Belongs to the long (4 C-C) scorpion toxin superfamily. Sodium channel inhibitor family. Alpha subfamily.</text>
</comment>
<accession>E7CLN7</accession>
<dbReference type="EMBL" id="HM233946">
    <property type="protein sequence ID" value="ADV16824.1"/>
    <property type="molecule type" value="mRNA"/>
</dbReference>
<dbReference type="SMR" id="E7CLN7"/>
<dbReference type="GO" id="GO:0005576">
    <property type="term" value="C:extracellular region"/>
    <property type="evidence" value="ECO:0007669"/>
    <property type="project" value="UniProtKB-SubCell"/>
</dbReference>
<dbReference type="GO" id="GO:0019871">
    <property type="term" value="F:sodium channel inhibitor activity"/>
    <property type="evidence" value="ECO:0007669"/>
    <property type="project" value="InterPro"/>
</dbReference>
<dbReference type="GO" id="GO:0090729">
    <property type="term" value="F:toxin activity"/>
    <property type="evidence" value="ECO:0007669"/>
    <property type="project" value="UniProtKB-KW"/>
</dbReference>
<dbReference type="GO" id="GO:0006952">
    <property type="term" value="P:defense response"/>
    <property type="evidence" value="ECO:0007669"/>
    <property type="project" value="InterPro"/>
</dbReference>
<dbReference type="CDD" id="cd23106">
    <property type="entry name" value="neurotoxins_LC_scorpion"/>
    <property type="match status" value="1"/>
</dbReference>
<dbReference type="Gene3D" id="3.30.30.10">
    <property type="entry name" value="Knottin, scorpion toxin-like"/>
    <property type="match status" value="1"/>
</dbReference>
<dbReference type="InterPro" id="IPR044062">
    <property type="entry name" value="LCN-type_CS_alpha_beta_dom"/>
</dbReference>
<dbReference type="InterPro" id="IPR003614">
    <property type="entry name" value="Scorpion_toxin-like"/>
</dbReference>
<dbReference type="InterPro" id="IPR036574">
    <property type="entry name" value="Scorpion_toxin-like_sf"/>
</dbReference>
<dbReference type="InterPro" id="IPR018218">
    <property type="entry name" value="Scorpion_toxinL"/>
</dbReference>
<dbReference type="InterPro" id="IPR002061">
    <property type="entry name" value="Scorpion_toxinL/defensin"/>
</dbReference>
<dbReference type="Pfam" id="PF00537">
    <property type="entry name" value="Toxin_3"/>
    <property type="match status" value="1"/>
</dbReference>
<dbReference type="PRINTS" id="PR00285">
    <property type="entry name" value="SCORPNTOXIN"/>
</dbReference>
<dbReference type="SMART" id="SM00505">
    <property type="entry name" value="Knot1"/>
    <property type="match status" value="1"/>
</dbReference>
<dbReference type="SUPFAM" id="SSF57095">
    <property type="entry name" value="Scorpion toxin-like"/>
    <property type="match status" value="1"/>
</dbReference>
<dbReference type="PROSITE" id="PS51863">
    <property type="entry name" value="LCN_CSAB"/>
    <property type="match status" value="1"/>
</dbReference>
<organism>
    <name type="scientific">Rhopalurus junceus</name>
    <name type="common">Caribbean blue scorpion</name>
    <dbReference type="NCBI Taxonomy" id="419285"/>
    <lineage>
        <taxon>Eukaryota</taxon>
        <taxon>Metazoa</taxon>
        <taxon>Ecdysozoa</taxon>
        <taxon>Arthropoda</taxon>
        <taxon>Chelicerata</taxon>
        <taxon>Arachnida</taxon>
        <taxon>Scorpiones</taxon>
        <taxon>Buthida</taxon>
        <taxon>Buthoidea</taxon>
        <taxon>Buthidae</taxon>
        <taxon>Rhopalurus</taxon>
    </lineage>
</organism>